<accession>Q9P7Y3</accession>
<keyword id="KW-0256">Endoplasmic reticulum</keyword>
<keyword id="KW-0472">Membrane</keyword>
<keyword id="KW-1185">Reference proteome</keyword>
<keyword id="KW-0812">Transmembrane</keyword>
<keyword id="KW-1133">Transmembrane helix</keyword>
<evidence type="ECO:0000250" key="1"/>
<evidence type="ECO:0000255" key="2"/>
<evidence type="ECO:0000256" key="3">
    <source>
        <dbReference type="SAM" id="MobiDB-lite"/>
    </source>
</evidence>
<evidence type="ECO:0000269" key="4">
    <source>
    </source>
</evidence>
<evidence type="ECO:0000305" key="5"/>
<organism>
    <name type="scientific">Schizosaccharomyces pombe (strain 972 / ATCC 24843)</name>
    <name type="common">Fission yeast</name>
    <dbReference type="NCBI Taxonomy" id="284812"/>
    <lineage>
        <taxon>Eukaryota</taxon>
        <taxon>Fungi</taxon>
        <taxon>Dikarya</taxon>
        <taxon>Ascomycota</taxon>
        <taxon>Taphrinomycotina</taxon>
        <taxon>Schizosaccharomycetes</taxon>
        <taxon>Schizosaccharomycetales</taxon>
        <taxon>Schizosaccharomycetaceae</taxon>
        <taxon>Schizosaccharomyces</taxon>
    </lineage>
</organism>
<comment type="function">
    <text evidence="1">Functions together with the other V-type ATPase assembly factors in the endoplasmic reticulum to efficiently assemble the V-type ATPase membrane sector V(0).</text>
</comment>
<comment type="subcellular location">
    <subcellularLocation>
        <location evidence="4">Endoplasmic reticulum membrane</location>
        <topology evidence="4">Multi-pass membrane protein</topology>
    </subcellularLocation>
</comment>
<comment type="similarity">
    <text evidence="5">Belongs to the PKR1 family.</text>
</comment>
<protein>
    <recommendedName>
        <fullName>V-type ATPase assembly factor pkr1</fullName>
    </recommendedName>
</protein>
<feature type="chain" id="PRO_0000374007" description="V-type ATPase assembly factor pkr1">
    <location>
        <begin position="1"/>
        <end position="132"/>
    </location>
</feature>
<feature type="topological domain" description="Cytoplasmic" evidence="1">
    <location>
        <begin position="1"/>
        <end position="19"/>
    </location>
</feature>
<feature type="transmembrane region" description="Helical" evidence="2">
    <location>
        <begin position="20"/>
        <end position="40"/>
    </location>
</feature>
<feature type="topological domain" description="Lumenal" evidence="1">
    <location>
        <begin position="41"/>
        <end position="47"/>
    </location>
</feature>
<feature type="transmembrane region" description="Helical" evidence="2">
    <location>
        <begin position="48"/>
        <end position="68"/>
    </location>
</feature>
<feature type="topological domain" description="Cytoplasmic" evidence="1">
    <location>
        <begin position="69"/>
        <end position="132"/>
    </location>
</feature>
<feature type="region of interest" description="Disordered" evidence="3">
    <location>
        <begin position="80"/>
        <end position="132"/>
    </location>
</feature>
<feature type="compositionally biased region" description="Low complexity" evidence="3">
    <location>
        <begin position="80"/>
        <end position="100"/>
    </location>
</feature>
<gene>
    <name type="primary">pkr1</name>
    <name type="ORF">SPBP23A10.02</name>
</gene>
<reference key="1">
    <citation type="journal article" date="2002" name="Nature">
        <title>The genome sequence of Schizosaccharomyces pombe.</title>
        <authorList>
            <person name="Wood V."/>
            <person name="Gwilliam R."/>
            <person name="Rajandream M.A."/>
            <person name="Lyne M.H."/>
            <person name="Lyne R."/>
            <person name="Stewart A."/>
            <person name="Sgouros J.G."/>
            <person name="Peat N."/>
            <person name="Hayles J."/>
            <person name="Baker S.G."/>
            <person name="Basham D."/>
            <person name="Bowman S."/>
            <person name="Brooks K."/>
            <person name="Brown D."/>
            <person name="Brown S."/>
            <person name="Chillingworth T."/>
            <person name="Churcher C.M."/>
            <person name="Collins M."/>
            <person name="Connor R."/>
            <person name="Cronin A."/>
            <person name="Davis P."/>
            <person name="Feltwell T."/>
            <person name="Fraser A."/>
            <person name="Gentles S."/>
            <person name="Goble A."/>
            <person name="Hamlin N."/>
            <person name="Harris D.E."/>
            <person name="Hidalgo J."/>
            <person name="Hodgson G."/>
            <person name="Holroyd S."/>
            <person name="Hornsby T."/>
            <person name="Howarth S."/>
            <person name="Huckle E.J."/>
            <person name="Hunt S."/>
            <person name="Jagels K."/>
            <person name="James K.D."/>
            <person name="Jones L."/>
            <person name="Jones M."/>
            <person name="Leather S."/>
            <person name="McDonald S."/>
            <person name="McLean J."/>
            <person name="Mooney P."/>
            <person name="Moule S."/>
            <person name="Mungall K.L."/>
            <person name="Murphy L.D."/>
            <person name="Niblett D."/>
            <person name="Odell C."/>
            <person name="Oliver K."/>
            <person name="O'Neil S."/>
            <person name="Pearson D."/>
            <person name="Quail M.A."/>
            <person name="Rabbinowitsch E."/>
            <person name="Rutherford K.M."/>
            <person name="Rutter S."/>
            <person name="Saunders D."/>
            <person name="Seeger K."/>
            <person name="Sharp S."/>
            <person name="Skelton J."/>
            <person name="Simmonds M.N."/>
            <person name="Squares R."/>
            <person name="Squares S."/>
            <person name="Stevens K."/>
            <person name="Taylor K."/>
            <person name="Taylor R.G."/>
            <person name="Tivey A."/>
            <person name="Walsh S.V."/>
            <person name="Warren T."/>
            <person name="Whitehead S."/>
            <person name="Woodward J.R."/>
            <person name="Volckaert G."/>
            <person name="Aert R."/>
            <person name="Robben J."/>
            <person name="Grymonprez B."/>
            <person name="Weltjens I."/>
            <person name="Vanstreels E."/>
            <person name="Rieger M."/>
            <person name="Schaefer M."/>
            <person name="Mueller-Auer S."/>
            <person name="Gabel C."/>
            <person name="Fuchs M."/>
            <person name="Duesterhoeft A."/>
            <person name="Fritzc C."/>
            <person name="Holzer E."/>
            <person name="Moestl D."/>
            <person name="Hilbert H."/>
            <person name="Borzym K."/>
            <person name="Langer I."/>
            <person name="Beck A."/>
            <person name="Lehrach H."/>
            <person name="Reinhardt R."/>
            <person name="Pohl T.M."/>
            <person name="Eger P."/>
            <person name="Zimmermann W."/>
            <person name="Wedler H."/>
            <person name="Wambutt R."/>
            <person name="Purnelle B."/>
            <person name="Goffeau A."/>
            <person name="Cadieu E."/>
            <person name="Dreano S."/>
            <person name="Gloux S."/>
            <person name="Lelaure V."/>
            <person name="Mottier S."/>
            <person name="Galibert F."/>
            <person name="Aves S.J."/>
            <person name="Xiang Z."/>
            <person name="Hunt C."/>
            <person name="Moore K."/>
            <person name="Hurst S.M."/>
            <person name="Lucas M."/>
            <person name="Rochet M."/>
            <person name="Gaillardin C."/>
            <person name="Tallada V.A."/>
            <person name="Garzon A."/>
            <person name="Thode G."/>
            <person name="Daga R.R."/>
            <person name="Cruzado L."/>
            <person name="Jimenez J."/>
            <person name="Sanchez M."/>
            <person name="del Rey F."/>
            <person name="Benito J."/>
            <person name="Dominguez A."/>
            <person name="Revuelta J.L."/>
            <person name="Moreno S."/>
            <person name="Armstrong J."/>
            <person name="Forsburg S.L."/>
            <person name="Cerutti L."/>
            <person name="Lowe T."/>
            <person name="McCombie W.R."/>
            <person name="Paulsen I."/>
            <person name="Potashkin J."/>
            <person name="Shpakovski G.V."/>
            <person name="Ussery D."/>
            <person name="Barrell B.G."/>
            <person name="Nurse P."/>
        </authorList>
    </citation>
    <scope>NUCLEOTIDE SEQUENCE [LARGE SCALE GENOMIC DNA]</scope>
    <source>
        <strain>972 / ATCC 24843</strain>
    </source>
</reference>
<reference key="2">
    <citation type="journal article" date="2006" name="Nat. Biotechnol.">
        <title>ORFeome cloning and global analysis of protein localization in the fission yeast Schizosaccharomyces pombe.</title>
        <authorList>
            <person name="Matsuyama A."/>
            <person name="Arai R."/>
            <person name="Yashiroda Y."/>
            <person name="Shirai A."/>
            <person name="Kamata A."/>
            <person name="Sekido S."/>
            <person name="Kobayashi Y."/>
            <person name="Hashimoto A."/>
            <person name="Hamamoto M."/>
            <person name="Hiraoka Y."/>
            <person name="Horinouchi S."/>
            <person name="Yoshida M."/>
        </authorList>
    </citation>
    <scope>SUBCELLULAR LOCATION [LARGE SCALE ANALYSIS]</scope>
</reference>
<name>PKR1_SCHPO</name>
<proteinExistence type="inferred from homology"/>
<dbReference type="EMBL" id="CU329671">
    <property type="protein sequence ID" value="CAB66430.1"/>
    <property type="molecule type" value="Genomic_DNA"/>
</dbReference>
<dbReference type="PIR" id="T50389">
    <property type="entry name" value="T50389"/>
</dbReference>
<dbReference type="RefSeq" id="NP_595814.1">
    <property type="nucleotide sequence ID" value="NM_001021718.2"/>
</dbReference>
<dbReference type="FunCoup" id="Q9P7Y3">
    <property type="interactions" value="54"/>
</dbReference>
<dbReference type="STRING" id="284812.Q9P7Y3"/>
<dbReference type="iPTMnet" id="Q9P7Y3"/>
<dbReference type="PaxDb" id="4896-SPBP23A10.02.1"/>
<dbReference type="EnsemblFungi" id="SPBP23A10.02.1">
    <property type="protein sequence ID" value="SPBP23A10.02.1:pep"/>
    <property type="gene ID" value="SPBP23A10.02"/>
</dbReference>
<dbReference type="GeneID" id="2541277"/>
<dbReference type="KEGG" id="spo:2541277"/>
<dbReference type="PomBase" id="SPBP23A10.02">
    <property type="gene designation" value="pkr1"/>
</dbReference>
<dbReference type="VEuPathDB" id="FungiDB:SPBP23A10.02"/>
<dbReference type="eggNOG" id="ENOG502S6V3">
    <property type="taxonomic scope" value="Eukaryota"/>
</dbReference>
<dbReference type="HOGENOM" id="CLU_068499_1_1_1"/>
<dbReference type="InParanoid" id="Q9P7Y3"/>
<dbReference type="OMA" id="VKLWEDI"/>
<dbReference type="PhylomeDB" id="Q9P7Y3"/>
<dbReference type="PRO" id="PR:Q9P7Y3"/>
<dbReference type="Proteomes" id="UP000002485">
    <property type="component" value="Chromosome II"/>
</dbReference>
<dbReference type="GO" id="GO:0005783">
    <property type="term" value="C:endoplasmic reticulum"/>
    <property type="evidence" value="ECO:0007005"/>
    <property type="project" value="PomBase"/>
</dbReference>
<dbReference type="GO" id="GO:0005789">
    <property type="term" value="C:endoplasmic reticulum membrane"/>
    <property type="evidence" value="ECO:0000318"/>
    <property type="project" value="GO_Central"/>
</dbReference>
<dbReference type="GO" id="GO:0070072">
    <property type="term" value="P:vacuolar proton-transporting V-type ATPase complex assembly"/>
    <property type="evidence" value="ECO:0000318"/>
    <property type="project" value="GO_Central"/>
</dbReference>
<dbReference type="InterPro" id="IPR013945">
    <property type="entry name" value="Pkr1"/>
</dbReference>
<dbReference type="PANTHER" id="PTHR28251">
    <property type="entry name" value="V-TYPE ATPASE ASSEMBLY FACTOR PKR1"/>
    <property type="match status" value="1"/>
</dbReference>
<dbReference type="PANTHER" id="PTHR28251:SF1">
    <property type="entry name" value="V-TYPE ATPASE ASSEMBLY FACTOR PKR1"/>
    <property type="match status" value="1"/>
</dbReference>
<dbReference type="Pfam" id="PF08636">
    <property type="entry name" value="Pkr1"/>
    <property type="match status" value="1"/>
</dbReference>
<sequence length="132" mass="14613">MSYWVELWESIFTPGVTPVLAKSAHVACGALVAVFLGLYIGTKSIHCLILFFLAICLWLSLTWFLVELAHARVNNDLQMSSQSANKNDDNSNNQNPSNNKEMSDKESDSATTTQTFSVPEELLRARTTANNS</sequence>